<keyword id="KW-1003">Cell membrane</keyword>
<keyword id="KW-0276">Fatty acid metabolism</keyword>
<keyword id="KW-0436">Ligase</keyword>
<keyword id="KW-0443">Lipid metabolism</keyword>
<keyword id="KW-0472">Membrane</keyword>
<keyword id="KW-1185">Reference proteome</keyword>
<keyword id="KW-0812">Transmembrane</keyword>
<keyword id="KW-1133">Transmembrane helix</keyword>
<accession>P9WQ53</accession>
<accession>L0T9R9</accession>
<accession>Q10776</accession>
<name>FAD11_MYCTU</name>
<sequence length="571" mass="62309">MARLRGAGAAGRCRPGRFGSSARRHGLADDGEPDRVLPARRRCSARRRHLVFGVQHPARRAADLRVRQRGDQGGHLRATVRRSRSRQRCAHRTHRLRRWRAPGTLSLTDLYAAASGDFFDFESTWRAVQPEDIVTLIYTSGTTGNPKGVEMTHANLLFEGYAIDEVLGIRFGDRVTSFLPSAHIADRMTGLYLQEMFGTQVTAVADARTIAAALPDVRPTVWGAVPRVWEKLKAGIEFTVARETDEMKRQALAWAMSVAGKRANALLAGESMSDQLVAEWAKADELVLSKLRERLGFGELRWALSGAAPIPKETLAFFAGIGIPIAEIWGMSELSCVATASHPRDGRLGTVGKLLPGLQGKIAEDGEYLVRGPLVMKGYRKEPAKTAEAIDSDGWLHTGDVFDIDSDGYLRVVDRKKELIINAAGKNMSPANIENTILAACPMVGVMMAIGDGRTYNTALLVFDADSLGPYAAQRGLDASPAALAADPEVIARIAAGVAEGNAKLSRVEQIKRFRILPTLWEPGGDEITLTMKLKRRRIAAKYSAEIEELYASELRPQVYEPAAVPSTQPA</sequence>
<evidence type="ECO:0000255" key="1"/>
<evidence type="ECO:0000256" key="2">
    <source>
        <dbReference type="SAM" id="MobiDB-lite"/>
    </source>
</evidence>
<evidence type="ECO:0000305" key="3"/>
<proteinExistence type="inferred from homology"/>
<dbReference type="EC" id="6.2.1.-"/>
<dbReference type="EMBL" id="AL123456">
    <property type="protein sequence ID" value="CCP44314.1"/>
    <property type="molecule type" value="Genomic_DNA"/>
</dbReference>
<dbReference type="PIR" id="C70762">
    <property type="entry name" value="C70762"/>
</dbReference>
<dbReference type="RefSeq" id="NP_216066.1">
    <property type="nucleotide sequence ID" value="NC_000962.3"/>
</dbReference>
<dbReference type="RefSeq" id="WP_003898924.1">
    <property type="nucleotide sequence ID" value="NC_000962.3"/>
</dbReference>
<dbReference type="FunCoup" id="P9WQ53">
    <property type="interactions" value="17"/>
</dbReference>
<dbReference type="STRING" id="83332.Rv1550"/>
<dbReference type="PaxDb" id="83332-Rv1550"/>
<dbReference type="DNASU" id="886380"/>
<dbReference type="GeneID" id="886380"/>
<dbReference type="KEGG" id="mtu:Rv1550"/>
<dbReference type="KEGG" id="mtv:RVBD_1550"/>
<dbReference type="TubercuList" id="Rv1550"/>
<dbReference type="eggNOG" id="COG1022">
    <property type="taxonomic scope" value="Bacteria"/>
</dbReference>
<dbReference type="InParanoid" id="P9WQ53"/>
<dbReference type="OrthoDB" id="9803968at2"/>
<dbReference type="PhylomeDB" id="P9WQ53"/>
<dbReference type="Proteomes" id="UP000001584">
    <property type="component" value="Chromosome"/>
</dbReference>
<dbReference type="GO" id="GO:0009274">
    <property type="term" value="C:peptidoglycan-based cell wall"/>
    <property type="evidence" value="ECO:0007005"/>
    <property type="project" value="MTBBASE"/>
</dbReference>
<dbReference type="GO" id="GO:0005886">
    <property type="term" value="C:plasma membrane"/>
    <property type="evidence" value="ECO:0007005"/>
    <property type="project" value="MTBBASE"/>
</dbReference>
<dbReference type="GO" id="GO:0016405">
    <property type="term" value="F:CoA-ligase activity"/>
    <property type="evidence" value="ECO:0000318"/>
    <property type="project" value="GO_Central"/>
</dbReference>
<dbReference type="GO" id="GO:0006631">
    <property type="term" value="P:fatty acid metabolic process"/>
    <property type="evidence" value="ECO:0007669"/>
    <property type="project" value="UniProtKB-KW"/>
</dbReference>
<dbReference type="CDD" id="cd05907">
    <property type="entry name" value="VL_LC_FACS_like"/>
    <property type="match status" value="1"/>
</dbReference>
<dbReference type="Gene3D" id="3.40.50.12780">
    <property type="entry name" value="N-terminal domain of ligase-like"/>
    <property type="match status" value="2"/>
</dbReference>
<dbReference type="InterPro" id="IPR020845">
    <property type="entry name" value="AMP-binding_CS"/>
</dbReference>
<dbReference type="InterPro" id="IPR000873">
    <property type="entry name" value="AMP-dep_synth/lig_dom"/>
</dbReference>
<dbReference type="InterPro" id="IPR042099">
    <property type="entry name" value="ANL_N_sf"/>
</dbReference>
<dbReference type="PANTHER" id="PTHR43272:SF32">
    <property type="entry name" value="AMP-DEPENDENT SYNTHETASE_LIGASE DOMAIN-CONTAINING PROTEIN"/>
    <property type="match status" value="1"/>
</dbReference>
<dbReference type="PANTHER" id="PTHR43272">
    <property type="entry name" value="LONG-CHAIN-FATTY-ACID--COA LIGASE"/>
    <property type="match status" value="1"/>
</dbReference>
<dbReference type="Pfam" id="PF00501">
    <property type="entry name" value="AMP-binding"/>
    <property type="match status" value="1"/>
</dbReference>
<dbReference type="Pfam" id="PF23562">
    <property type="entry name" value="AMP-binding_C_3"/>
    <property type="match status" value="1"/>
</dbReference>
<dbReference type="SUPFAM" id="SSF56801">
    <property type="entry name" value="Acetyl-CoA synthetase-like"/>
    <property type="match status" value="1"/>
</dbReference>
<dbReference type="PROSITE" id="PS00455">
    <property type="entry name" value="AMP_BINDING"/>
    <property type="match status" value="1"/>
</dbReference>
<organism>
    <name type="scientific">Mycobacterium tuberculosis (strain ATCC 25618 / H37Rv)</name>
    <dbReference type="NCBI Taxonomy" id="83332"/>
    <lineage>
        <taxon>Bacteria</taxon>
        <taxon>Bacillati</taxon>
        <taxon>Actinomycetota</taxon>
        <taxon>Actinomycetes</taxon>
        <taxon>Mycobacteriales</taxon>
        <taxon>Mycobacteriaceae</taxon>
        <taxon>Mycobacterium</taxon>
        <taxon>Mycobacterium tuberculosis complex</taxon>
    </lineage>
</organism>
<reference key="1">
    <citation type="journal article" date="1998" name="Nature">
        <title>Deciphering the biology of Mycobacterium tuberculosis from the complete genome sequence.</title>
        <authorList>
            <person name="Cole S.T."/>
            <person name="Brosch R."/>
            <person name="Parkhill J."/>
            <person name="Garnier T."/>
            <person name="Churcher C.M."/>
            <person name="Harris D.E."/>
            <person name="Gordon S.V."/>
            <person name="Eiglmeier K."/>
            <person name="Gas S."/>
            <person name="Barry C.E. III"/>
            <person name="Tekaia F."/>
            <person name="Badcock K."/>
            <person name="Basham D."/>
            <person name="Brown D."/>
            <person name="Chillingworth T."/>
            <person name="Connor R."/>
            <person name="Davies R.M."/>
            <person name="Devlin K."/>
            <person name="Feltwell T."/>
            <person name="Gentles S."/>
            <person name="Hamlin N."/>
            <person name="Holroyd S."/>
            <person name="Hornsby T."/>
            <person name="Jagels K."/>
            <person name="Krogh A."/>
            <person name="McLean J."/>
            <person name="Moule S."/>
            <person name="Murphy L.D."/>
            <person name="Oliver S."/>
            <person name="Osborne J."/>
            <person name="Quail M.A."/>
            <person name="Rajandream M.A."/>
            <person name="Rogers J."/>
            <person name="Rutter S."/>
            <person name="Seeger K."/>
            <person name="Skelton S."/>
            <person name="Squares S."/>
            <person name="Squares R."/>
            <person name="Sulston J.E."/>
            <person name="Taylor K."/>
            <person name="Whitehead S."/>
            <person name="Barrell B.G."/>
        </authorList>
    </citation>
    <scope>NUCLEOTIDE SEQUENCE [LARGE SCALE GENOMIC DNA]</scope>
    <source>
        <strain>ATCC 25618 / H37Rv</strain>
    </source>
</reference>
<reference key="2">
    <citation type="journal article" date="2008" name="BMC Syst. Biol.">
        <title>targetTB: a target identification pipeline for Mycobacterium tuberculosis through an interactome, reactome and genome-scale structural analysis.</title>
        <authorList>
            <person name="Raman K."/>
            <person name="Yeturu K."/>
            <person name="Chandra N."/>
        </authorList>
    </citation>
    <scope>IDENTIFICATION AS A DRUG TARGET [LARGE SCALE ANALYSIS]</scope>
</reference>
<protein>
    <recommendedName>
        <fullName>Putative fatty-acid--CoA ligase fadD11</fullName>
        <ecNumber>6.2.1.-</ecNumber>
    </recommendedName>
    <alternativeName>
        <fullName>Acyl-CoA synthetase</fullName>
    </alternativeName>
</protein>
<feature type="chain" id="PRO_0000193133" description="Putative fatty-acid--CoA ligase fadD11">
    <location>
        <begin position="1"/>
        <end position="571"/>
    </location>
</feature>
<feature type="transmembrane region" description="Helical" evidence="1">
    <location>
        <begin position="314"/>
        <end position="334"/>
    </location>
</feature>
<feature type="transmembrane region" description="Helical" evidence="1">
    <location>
        <begin position="431"/>
        <end position="451"/>
    </location>
</feature>
<feature type="region of interest" description="Disordered" evidence="2">
    <location>
        <begin position="1"/>
        <end position="35"/>
    </location>
</feature>
<feature type="region of interest" description="Disordered" evidence="2">
    <location>
        <begin position="67"/>
        <end position="91"/>
    </location>
</feature>
<feature type="compositionally biased region" description="Low complexity" evidence="2">
    <location>
        <begin position="1"/>
        <end position="19"/>
    </location>
</feature>
<feature type="compositionally biased region" description="Basic residues" evidence="2">
    <location>
        <begin position="78"/>
        <end position="91"/>
    </location>
</feature>
<gene>
    <name type="primary">fadD11</name>
    <name type="ordered locus">Rv1550</name>
    <name type="ORF">MTCY48.15c</name>
</gene>
<comment type="subcellular location">
    <subcellularLocation>
        <location evidence="3">Cell membrane</location>
        <topology evidence="3">Multi-pass membrane protein</topology>
    </subcellularLocation>
</comment>
<comment type="miscellaneous">
    <text>Was identified as a high-confidence drug target.</text>
</comment>
<comment type="similarity">
    <text evidence="3">Belongs to the ATP-dependent AMP-binding enzyme family.</text>
</comment>